<protein>
    <recommendedName>
        <fullName evidence="4">Ochratoxinase</fullName>
        <shortName evidence="4">OTase</shortName>
        <ecNumber evidence="2">3.4.17.-</ecNumber>
    </recommendedName>
    <alternativeName>
        <fullName evidence="4">Amidohydrolase 2</fullName>
        <shortName evidence="4">Amidase 2</shortName>
    </alternativeName>
    <alternativeName>
        <fullName evidence="5">Carboxypeptidase Am2</fullName>
    </alternativeName>
</protein>
<evidence type="ECO:0000250" key="1">
    <source>
        <dbReference type="UniProtKB" id="A2R2V4"/>
    </source>
</evidence>
<evidence type="ECO:0000269" key="2">
    <source>
    </source>
</evidence>
<evidence type="ECO:0000269" key="3">
    <source>
    </source>
</evidence>
<evidence type="ECO:0000303" key="4">
    <source>
    </source>
</evidence>
<evidence type="ECO:0000303" key="5">
    <source>
    </source>
</evidence>
<evidence type="ECO:0000305" key="6"/>
<evidence type="ECO:0007829" key="7">
    <source>
        <dbReference type="PDB" id="4C5Z"/>
    </source>
</evidence>
<proteinExistence type="evidence at protein level"/>
<accession>G3XP38</accession>
<name>OTASE_ASPNA</name>
<sequence>MVRRIASATPMVQSPMSPLGTTYCVRPNSVSMNLQRRPLVIASTDEAKVTIIYAGLLIPGDGEPLRNAALVISDKIIAFVGSEADIPKKYLRSTQSTHRVPVLMPGLWDCHMHFGGDDDYYNDYTSGLATHPASSGARLARGCWEALQNGYTSYRDLAGYGCEVAKAINDGTIVGPNVYSSGAALSQTAGHGDIFALPAGEVLGSYGVMNPRPGYWGAGPLCIADGVEEVRRAVRLQIRRGAKVIKVMASGGVMSRDDNPNFAQFSPEELKVIVEEAARQNRIVSAHVHGKAGIMAAIKAGCKSLEHVSYADEEVWELMKEKGILYVATRSVIEIFLASNGEGLVKESWAKLQALADSHLKAYQGAIKAGVTIALGTDTAPGGPTALELQFAVERGGMTPLEAIKAATANAPLSVGPQAPLTGQLREGYEADVIALEENPLEDIKVFQEPKAVTHVWKGGKLFKGPGIGPWGEDARNPFL</sequence>
<reference key="1">
    <citation type="journal article" date="2011" name="Genome Res.">
        <title>Comparative genomics of citric-acid-producing Aspergillus niger ATCC 1015 versus enzyme-producing CBS 513.88.</title>
        <authorList>
            <person name="Andersen M.R."/>
            <person name="Salazar M.P."/>
            <person name="Schaap P.J."/>
            <person name="van de Vondervoort P.J.I."/>
            <person name="Culley D."/>
            <person name="Thykaer J."/>
            <person name="Frisvad J.C."/>
            <person name="Nielsen K.F."/>
            <person name="Albang R."/>
            <person name="Albermann K."/>
            <person name="Berka R.M."/>
            <person name="Braus G.H."/>
            <person name="Braus-Stromeyer S.A."/>
            <person name="Corrochano L.M."/>
            <person name="Dai Z."/>
            <person name="van Dijck P.W.M."/>
            <person name="Hofmann G."/>
            <person name="Lasure L.L."/>
            <person name="Magnuson J.K."/>
            <person name="Menke H."/>
            <person name="Meijer M."/>
            <person name="Meijer S.L."/>
            <person name="Nielsen J.B."/>
            <person name="Nielsen M.L."/>
            <person name="van Ooyen A.J.J."/>
            <person name="Pel H.J."/>
            <person name="Poulsen L."/>
            <person name="Samson R.A."/>
            <person name="Stam H."/>
            <person name="Tsang A."/>
            <person name="van den Brink J.M."/>
            <person name="Atkins A."/>
            <person name="Aerts A."/>
            <person name="Shapiro H."/>
            <person name="Pangilinan J."/>
            <person name="Salamov A."/>
            <person name="Lou Y."/>
            <person name="Lindquist E."/>
            <person name="Lucas S."/>
            <person name="Grimwood J."/>
            <person name="Grigoriev I.V."/>
            <person name="Kubicek C.P."/>
            <person name="Martinez D."/>
            <person name="van Peij N.N.M.E."/>
            <person name="Roubos J.A."/>
            <person name="Nielsen J."/>
            <person name="Baker S.E."/>
        </authorList>
    </citation>
    <scope>NUCLEOTIDE SEQUENCE [LARGE SCALE GENOMIC DNA]</scope>
    <source>
        <strain>ATCC 1015 / CBS 113.46 / FGSC A1144 / LSHB Ac4 / NCTC 3858a / NRRL 328 / USDA 3528.7</strain>
    </source>
</reference>
<reference key="2">
    <citation type="journal article" date="2021" name="J. Biotechnol.">
        <title>Engineering a carboxypeptidase from Aspergillus niger M00988 by mutation to increase its ability in high Fischer ratio oligopeptide preparation.</title>
        <authorList>
            <person name="Xiong K."/>
            <person name="Liu J."/>
            <person name="Wang X."/>
            <person name="Sun B."/>
            <person name="Zhang Y."/>
            <person name="Zhao Z."/>
            <person name="Pei P."/>
            <person name="Li X."/>
        </authorList>
    </citation>
    <scope>FUNCTION</scope>
    <scope>CATALYTIC ACTIVITY</scope>
    <scope>BIOTECHNOLOGY</scope>
</reference>
<reference key="3">
    <citation type="journal article" date="2014" name="Biochem. J.">
        <title>Structural and functional characterization of ochratoxinase, a novel mycotoxin-degrading enzyme.</title>
        <authorList>
            <person name="Dobritzsch D."/>
            <person name="Wang H."/>
            <person name="Schneider G."/>
            <person name="Yu S."/>
        </authorList>
    </citation>
    <scope>X-RAY CRYSTALLOGRAPHY (2.50 ANGSTROMS) OF 43-480</scope>
    <scope>FUNCTION</scope>
    <scope>SUBCELLULAR LOCATION</scope>
    <scope>CATALYTIC ACTIVITY</scope>
    <scope>BIOPHYSICOCHEMICAL PROPERTIES</scope>
    <scope>SUBUNIT</scope>
    <scope>DOMAIN</scope>
    <scope>COFACTOR</scope>
    <scope>ACTIVE SITE</scope>
    <scope>ACTIVITY REGULATION</scope>
    <scope>BIOTECHNOLOGY</scope>
</reference>
<dbReference type="EC" id="3.4.17.-" evidence="2"/>
<dbReference type="EMBL" id="ACJE01000002">
    <property type="protein sequence ID" value="EHA27693.1"/>
    <property type="molecule type" value="Genomic_DNA"/>
</dbReference>
<dbReference type="PDB" id="4C5Z">
    <property type="method" value="X-ray"/>
    <property type="resolution" value="2.50 A"/>
    <property type="chains" value="A/B=43-480"/>
</dbReference>
<dbReference type="PDBsum" id="4C5Z"/>
<dbReference type="SMR" id="G3XP38"/>
<dbReference type="STRING" id="380704.G3XP38"/>
<dbReference type="VEuPathDB" id="FungiDB:ASPNIDRAFT2_1141547"/>
<dbReference type="HOGENOM" id="CLU_023620_2_1_1"/>
<dbReference type="OrthoDB" id="110423at5052"/>
<dbReference type="EvolutionaryTrace" id="G3XP38"/>
<dbReference type="Proteomes" id="UP000009038">
    <property type="component" value="Unassembled WGS sequence"/>
</dbReference>
<dbReference type="GO" id="GO:0005576">
    <property type="term" value="C:extracellular region"/>
    <property type="evidence" value="ECO:0007669"/>
    <property type="project" value="UniProtKB-SubCell"/>
</dbReference>
<dbReference type="GO" id="GO:0004180">
    <property type="term" value="F:carboxypeptidase activity"/>
    <property type="evidence" value="ECO:0007669"/>
    <property type="project" value="UniProtKB-KW"/>
</dbReference>
<dbReference type="GO" id="GO:0016810">
    <property type="term" value="F:hydrolase activity, acting on carbon-nitrogen (but not peptide) bonds"/>
    <property type="evidence" value="ECO:0007669"/>
    <property type="project" value="InterPro"/>
</dbReference>
<dbReference type="GO" id="GO:0046872">
    <property type="term" value="F:metal ion binding"/>
    <property type="evidence" value="ECO:0007669"/>
    <property type="project" value="UniProtKB-KW"/>
</dbReference>
<dbReference type="GO" id="GO:0008237">
    <property type="term" value="F:metallopeptidase activity"/>
    <property type="evidence" value="ECO:0007669"/>
    <property type="project" value="UniProtKB-KW"/>
</dbReference>
<dbReference type="GO" id="GO:0006508">
    <property type="term" value="P:proteolysis"/>
    <property type="evidence" value="ECO:0007669"/>
    <property type="project" value="UniProtKB-KW"/>
</dbReference>
<dbReference type="CDD" id="cd01299">
    <property type="entry name" value="Met_dep_hydrolase_A"/>
    <property type="match status" value="1"/>
</dbReference>
<dbReference type="FunFam" id="3.20.20.140:FF:000068">
    <property type="entry name" value="Amidohydrolase"/>
    <property type="match status" value="1"/>
</dbReference>
<dbReference type="Gene3D" id="3.20.20.140">
    <property type="entry name" value="Metal-dependent hydrolases"/>
    <property type="match status" value="1"/>
</dbReference>
<dbReference type="InterPro" id="IPR006680">
    <property type="entry name" value="Amidohydro-rel"/>
</dbReference>
<dbReference type="InterPro" id="IPR011059">
    <property type="entry name" value="Metal-dep_hydrolase_composite"/>
</dbReference>
<dbReference type="InterPro" id="IPR032466">
    <property type="entry name" value="Metal_Hydrolase"/>
</dbReference>
<dbReference type="InterPro" id="IPR051781">
    <property type="entry name" value="Metallo-dep_Hydrolase"/>
</dbReference>
<dbReference type="PANTHER" id="PTHR43135">
    <property type="entry name" value="ALPHA-D-RIBOSE 1-METHYLPHOSPHONATE 5-TRIPHOSPHATE DIPHOSPHATASE"/>
    <property type="match status" value="1"/>
</dbReference>
<dbReference type="PANTHER" id="PTHR43135:SF3">
    <property type="entry name" value="ALPHA-D-RIBOSE 1-METHYLPHOSPHONATE 5-TRIPHOSPHATE DIPHOSPHATASE"/>
    <property type="match status" value="1"/>
</dbReference>
<dbReference type="Pfam" id="PF01979">
    <property type="entry name" value="Amidohydro_1"/>
    <property type="match status" value="1"/>
</dbReference>
<dbReference type="SUPFAM" id="SSF51338">
    <property type="entry name" value="Composite domain of metallo-dependent hydrolases"/>
    <property type="match status" value="2"/>
</dbReference>
<dbReference type="SUPFAM" id="SSF51556">
    <property type="entry name" value="Metallo-dependent hydrolases"/>
    <property type="match status" value="1"/>
</dbReference>
<gene>
    <name evidence="4" type="primary">Am2</name>
    <name type="ORF">ASPNIDRAFT_41631</name>
</gene>
<keyword id="KW-0002">3D-structure</keyword>
<keyword id="KW-0121">Carboxypeptidase</keyword>
<keyword id="KW-0378">Hydrolase</keyword>
<keyword id="KW-0479">Metal-binding</keyword>
<keyword id="KW-0482">Metalloprotease</keyword>
<keyword id="KW-0645">Protease</keyword>
<keyword id="KW-0964">Secreted</keyword>
<keyword id="KW-0862">Zinc</keyword>
<organism>
    <name type="scientific">Aspergillus niger (strain ATCC 1015 / CBS 113.46 / FGSC A1144 / LSHB Ac4 / NCTC 3858a / NRRL 328 / USDA 3528.7)</name>
    <dbReference type="NCBI Taxonomy" id="380704"/>
    <lineage>
        <taxon>Eukaryota</taxon>
        <taxon>Fungi</taxon>
        <taxon>Dikarya</taxon>
        <taxon>Ascomycota</taxon>
        <taxon>Pezizomycotina</taxon>
        <taxon>Eurotiomycetes</taxon>
        <taxon>Eurotiomycetidae</taxon>
        <taxon>Eurotiales</taxon>
        <taxon>Aspergillaceae</taxon>
        <taxon>Aspergillus</taxon>
        <taxon>Aspergillus subgen. Circumdati</taxon>
    </lineage>
</organism>
<comment type="function">
    <text evidence="2 3">Carboxypeptidase that catalyzes the release of a C-terminal amino acid with specific catalytic activity for aromatic amino acids such as phenylalanine (PubMed:24947135, PubMed:33647354). Is able to degrade ochratoxin A, one of the five major mycotoxins most harmful to humans and animals that is produced by Aspergillus and Penicillium species and occurs in a wide range of agricultural products (PubMed:24947135).</text>
</comment>
<comment type="catalytic activity">
    <reaction evidence="2">
        <text>ochratoxin A + H2O = ochratoxin alpha + L-phenylalanine</text>
        <dbReference type="Rhea" id="RHEA:72751"/>
        <dbReference type="ChEBI" id="CHEBI:15377"/>
        <dbReference type="ChEBI" id="CHEBI:58095"/>
        <dbReference type="ChEBI" id="CHEBI:166829"/>
        <dbReference type="ChEBI" id="CHEBI:192527"/>
    </reaction>
    <physiologicalReaction direction="left-to-right" evidence="2">
        <dbReference type="Rhea" id="RHEA:72752"/>
    </physiologicalReaction>
</comment>
<comment type="cofactor">
    <cofactor evidence="2">
        <name>Zn(2+)</name>
        <dbReference type="ChEBI" id="CHEBI:29105"/>
    </cofactor>
</comment>
<comment type="activity regulation">
    <text evidence="2">The Zn(2+)-specific chelator 1,10-phenanthroline inhibits the enzyme activity.</text>
</comment>
<comment type="biophysicochemical properties">
    <phDependence>
        <text evidence="2">Optimum pH is 6.</text>
    </phDependence>
    <temperatureDependence>
        <text evidence="2">Optimum temperature is 66 degrees Celsius.</text>
    </temperatureDependence>
</comment>
<comment type="subunit">
    <text evidence="2">Homooctamer.</text>
</comment>
<comment type="subcellular location">
    <subcellularLocation>
        <location evidence="2">Secreted</location>
    </subcellularLocation>
</comment>
<comment type="domain">
    <text evidence="2">Each subunit of the homooctameric enzyme folds into a two-domain structure characteristic of a metal dependent amidohydrolase, with a twisted TIM (triosephosphateisomerase)-barrel and a smaller beta-sandwich domain.</text>
</comment>
<comment type="biotechnology">
    <text evidence="2 3">Detoxification of contaminated food is a challenging health issue and ochratoxinase is a promising enzyme that hydrolyzes ochrtoxin A, a mycotoxin demonstrated to have nephrotoxic, immunotoxic, genotoxic, neurotoxic, and teratogenic properties; and that occurs in a wide range of agricultural products (PubMed:24947135). Its carboxypeptidase activity also allows to produce high Fischer ratio (the ratio of moles of branched chain amino acid content to aromatic amino acid content) oligopeptides, a kind of functional oligopeptides that protect the liver, treat phenylketonuria, have anti-fatigue properties, exhibits antioxidant properties, and support anticoagulation of the blood (PubMed:33647354). Producing high Fischer ratio oligopeptides using an enzymatic method is therefore of great health significance and economic benefit (PubMed:33647354).</text>
</comment>
<comment type="similarity">
    <text evidence="6">Belongs to the metallo-dependent hydrolases superfamily. Ochratoxinase amidase 2 family.</text>
</comment>
<feature type="chain" id="PRO_0000453664" description="Ochratoxinase">
    <location>
        <begin position="1"/>
        <end position="480"/>
    </location>
</feature>
<feature type="active site" evidence="1">
    <location>
        <position position="246"/>
    </location>
</feature>
<feature type="active site" evidence="1">
    <location>
        <position position="378"/>
    </location>
</feature>
<feature type="binding site" evidence="1">
    <location>
        <position position="111"/>
    </location>
    <ligand>
        <name>Zn(2+)</name>
        <dbReference type="ChEBI" id="CHEBI:29105"/>
        <label>1</label>
    </ligand>
</feature>
<feature type="binding site" evidence="1">
    <location>
        <position position="113"/>
    </location>
    <ligand>
        <name>Zn(2+)</name>
        <dbReference type="ChEBI" id="CHEBI:29105"/>
        <label>1</label>
    </ligand>
</feature>
<feature type="binding site" evidence="1">
    <location>
        <position position="246"/>
    </location>
    <ligand>
        <name>Zn(2+)</name>
        <dbReference type="ChEBI" id="CHEBI:29105"/>
        <label>1</label>
    </ligand>
</feature>
<feature type="binding site" evidence="1">
    <location>
        <position position="246"/>
    </location>
    <ligand>
        <name>Zn(2+)</name>
        <dbReference type="ChEBI" id="CHEBI:29105"/>
        <label>2</label>
    </ligand>
</feature>
<feature type="binding site" evidence="1">
    <location>
        <position position="287"/>
    </location>
    <ligand>
        <name>Zn(2+)</name>
        <dbReference type="ChEBI" id="CHEBI:29105"/>
        <label>2</label>
    </ligand>
</feature>
<feature type="binding site" evidence="1">
    <location>
        <position position="307"/>
    </location>
    <ligand>
        <name>Zn(2+)</name>
        <dbReference type="ChEBI" id="CHEBI:29105"/>
        <label>2</label>
    </ligand>
</feature>
<feature type="strand" evidence="7">
    <location>
        <begin position="49"/>
        <end position="57"/>
    </location>
</feature>
<feature type="strand" evidence="7">
    <location>
        <begin position="60"/>
        <end position="62"/>
    </location>
</feature>
<feature type="strand" evidence="7">
    <location>
        <begin position="65"/>
        <end position="73"/>
    </location>
</feature>
<feature type="strand" evidence="7">
    <location>
        <begin position="76"/>
        <end position="82"/>
    </location>
</feature>
<feature type="helix" evidence="7">
    <location>
        <begin position="83"/>
        <end position="85"/>
    </location>
</feature>
<feature type="helix" evidence="7">
    <location>
        <begin position="88"/>
        <end position="93"/>
    </location>
</feature>
<feature type="strand" evidence="7">
    <location>
        <begin position="95"/>
        <end position="105"/>
    </location>
</feature>
<feature type="strand" evidence="7">
    <location>
        <begin position="107"/>
        <end position="112"/>
    </location>
</feature>
<feature type="helix" evidence="7">
    <location>
        <begin position="125"/>
        <end position="129"/>
    </location>
</feature>
<feature type="helix" evidence="7">
    <location>
        <begin position="132"/>
        <end position="148"/>
    </location>
</feature>
<feature type="strand" evidence="7">
    <location>
        <begin position="151"/>
        <end position="160"/>
    </location>
</feature>
<feature type="helix" evidence="7">
    <location>
        <begin position="161"/>
        <end position="169"/>
    </location>
</feature>
<feature type="strand" evidence="7">
    <location>
        <begin position="177"/>
        <end position="180"/>
    </location>
</feature>
<feature type="strand" evidence="7">
    <location>
        <begin position="182"/>
        <end position="186"/>
    </location>
</feature>
<feature type="helix" evidence="7">
    <location>
        <begin position="199"/>
        <end position="206"/>
    </location>
</feature>
<feature type="strand" evidence="7">
    <location>
        <begin position="207"/>
        <end position="210"/>
    </location>
</feature>
<feature type="turn" evidence="7">
    <location>
        <begin position="213"/>
        <end position="217"/>
    </location>
</feature>
<feature type="strand" evidence="7">
    <location>
        <begin position="219"/>
        <end position="223"/>
    </location>
</feature>
<feature type="helix" evidence="7">
    <location>
        <begin position="227"/>
        <end position="239"/>
    </location>
</feature>
<feature type="strand" evidence="7">
    <location>
        <begin position="243"/>
        <end position="248"/>
    </location>
</feature>
<feature type="helix" evidence="7">
    <location>
        <begin position="267"/>
        <end position="279"/>
    </location>
</feature>
<feature type="strand" evidence="7">
    <location>
        <begin position="284"/>
        <end position="288"/>
    </location>
</feature>
<feature type="helix" evidence="7">
    <location>
        <begin position="291"/>
        <end position="300"/>
    </location>
</feature>
<feature type="strand" evidence="7">
    <location>
        <begin position="304"/>
        <end position="307"/>
    </location>
</feature>
<feature type="helix" evidence="7">
    <location>
        <begin position="313"/>
        <end position="322"/>
    </location>
</feature>
<feature type="strand" evidence="7">
    <location>
        <begin position="325"/>
        <end position="327"/>
    </location>
</feature>
<feature type="helix" evidence="7">
    <location>
        <begin position="330"/>
        <end position="339"/>
    </location>
</feature>
<feature type="helix" evidence="7">
    <location>
        <begin position="346"/>
        <end position="369"/>
    </location>
</feature>
<feature type="helix" evidence="7">
    <location>
        <begin position="387"/>
        <end position="394"/>
    </location>
</feature>
<feature type="helix" evidence="7">
    <location>
        <begin position="400"/>
        <end position="407"/>
    </location>
</feature>
<feature type="turn" evidence="7">
    <location>
        <begin position="408"/>
        <end position="410"/>
    </location>
</feature>
<feature type="helix" evidence="7">
    <location>
        <begin position="411"/>
        <end position="418"/>
    </location>
</feature>
<feature type="strand" evidence="7">
    <location>
        <begin position="433"/>
        <end position="438"/>
    </location>
</feature>
<feature type="turn" evidence="7">
    <location>
        <begin position="440"/>
        <end position="442"/>
    </location>
</feature>
<feature type="helix" evidence="7">
    <location>
        <begin position="444"/>
        <end position="448"/>
    </location>
</feature>
<feature type="helix" evidence="7">
    <location>
        <begin position="450"/>
        <end position="452"/>
    </location>
</feature>
<feature type="strand" evidence="7">
    <location>
        <begin position="453"/>
        <end position="458"/>
    </location>
</feature>
<feature type="strand" evidence="7">
    <location>
        <begin position="461"/>
        <end position="465"/>
    </location>
</feature>